<dbReference type="EMBL" id="AAFI02000027">
    <property type="protein sequence ID" value="EAL67875.1"/>
    <property type="molecule type" value="Genomic_DNA"/>
</dbReference>
<dbReference type="RefSeq" id="XP_641851.1">
    <property type="nucleotide sequence ID" value="XM_636759.1"/>
</dbReference>
<dbReference type="SMR" id="Q54X77"/>
<dbReference type="FunCoup" id="Q54X77">
    <property type="interactions" value="29"/>
</dbReference>
<dbReference type="STRING" id="44689.Q54X77"/>
<dbReference type="PaxDb" id="44689-DDB0220501"/>
<dbReference type="EnsemblProtists" id="EAL67875">
    <property type="protein sequence ID" value="EAL67875"/>
    <property type="gene ID" value="DDB_G0279151"/>
</dbReference>
<dbReference type="GeneID" id="8621896"/>
<dbReference type="KEGG" id="ddi:DDB_G0279151"/>
<dbReference type="dictyBase" id="DDB_G0279151">
    <property type="gene designation" value="cenB"/>
</dbReference>
<dbReference type="VEuPathDB" id="AmoebaDB:DDB_G0279151"/>
<dbReference type="eggNOG" id="KOG0028">
    <property type="taxonomic scope" value="Eukaryota"/>
</dbReference>
<dbReference type="HOGENOM" id="CLU_061288_2_2_1"/>
<dbReference type="InParanoid" id="Q54X77"/>
<dbReference type="OMA" id="CEIVICA"/>
<dbReference type="PhylomeDB" id="Q54X77"/>
<dbReference type="Reactome" id="R-DDI-5696394">
    <property type="pathway name" value="DNA Damage Recognition in GG-NER"/>
</dbReference>
<dbReference type="Reactome" id="R-DDI-5696395">
    <property type="pathway name" value="Formation of Incision Complex in GG-NER"/>
</dbReference>
<dbReference type="Reactome" id="R-DDI-9646399">
    <property type="pathway name" value="Aggrephagy"/>
</dbReference>
<dbReference type="PRO" id="PR:Q54X77"/>
<dbReference type="Proteomes" id="UP000002195">
    <property type="component" value="Chromosome 3"/>
</dbReference>
<dbReference type="GO" id="GO:0005814">
    <property type="term" value="C:centriole"/>
    <property type="evidence" value="ECO:0000318"/>
    <property type="project" value="GO_Central"/>
</dbReference>
<dbReference type="GO" id="GO:0005813">
    <property type="term" value="C:centrosome"/>
    <property type="evidence" value="ECO:0007669"/>
    <property type="project" value="UniProtKB-SubCell"/>
</dbReference>
<dbReference type="GO" id="GO:0005737">
    <property type="term" value="C:cytoplasm"/>
    <property type="evidence" value="ECO:0000314"/>
    <property type="project" value="dictyBase"/>
</dbReference>
<dbReference type="GO" id="GO:0005635">
    <property type="term" value="C:nuclear envelope"/>
    <property type="evidence" value="ECO:0000314"/>
    <property type="project" value="dictyBase"/>
</dbReference>
<dbReference type="GO" id="GO:0005654">
    <property type="term" value="C:nucleoplasm"/>
    <property type="evidence" value="ECO:0000314"/>
    <property type="project" value="dictyBase"/>
</dbReference>
<dbReference type="GO" id="GO:0005634">
    <property type="term" value="C:nucleus"/>
    <property type="evidence" value="ECO:0000314"/>
    <property type="project" value="dictyBase"/>
</dbReference>
<dbReference type="GO" id="GO:0005509">
    <property type="term" value="F:calcium ion binding"/>
    <property type="evidence" value="ECO:0000318"/>
    <property type="project" value="GO_Central"/>
</dbReference>
<dbReference type="GO" id="GO:0007098">
    <property type="term" value="P:centrosome cycle"/>
    <property type="evidence" value="ECO:0000315"/>
    <property type="project" value="dictyBase"/>
</dbReference>
<dbReference type="GO" id="GO:0000226">
    <property type="term" value="P:microtubule cytoskeleton organization"/>
    <property type="evidence" value="ECO:0000318"/>
    <property type="project" value="GO_Central"/>
</dbReference>
<dbReference type="GO" id="GO:0007020">
    <property type="term" value="P:microtubule nucleation"/>
    <property type="evidence" value="ECO:0000315"/>
    <property type="project" value="dictyBase"/>
</dbReference>
<dbReference type="GO" id="GO:0000281">
    <property type="term" value="P:mitotic cytokinesis"/>
    <property type="evidence" value="ECO:0000315"/>
    <property type="project" value="dictyBase"/>
</dbReference>
<dbReference type="GO" id="GO:0006998">
    <property type="term" value="P:nuclear envelope organization"/>
    <property type="evidence" value="ECO:0000315"/>
    <property type="project" value="dictyBase"/>
</dbReference>
<dbReference type="GO" id="GO:0006997">
    <property type="term" value="P:nucleus organization"/>
    <property type="evidence" value="ECO:0000315"/>
    <property type="project" value="dictyBase"/>
</dbReference>
<dbReference type="GO" id="GO:0010824">
    <property type="term" value="P:regulation of centrosome duplication"/>
    <property type="evidence" value="ECO:0000315"/>
    <property type="project" value="dictyBase"/>
</dbReference>
<dbReference type="CDD" id="cd00051">
    <property type="entry name" value="EFh"/>
    <property type="match status" value="1"/>
</dbReference>
<dbReference type="FunFam" id="1.10.238.10:FF:000362">
    <property type="entry name" value="Centrin-4"/>
    <property type="match status" value="1"/>
</dbReference>
<dbReference type="FunFam" id="1.10.238.10:FF:000650">
    <property type="entry name" value="Centrin-B"/>
    <property type="match status" value="1"/>
</dbReference>
<dbReference type="Gene3D" id="1.10.238.10">
    <property type="entry name" value="EF-hand"/>
    <property type="match status" value="2"/>
</dbReference>
<dbReference type="InterPro" id="IPR050145">
    <property type="entry name" value="Centrin_CML-like"/>
</dbReference>
<dbReference type="InterPro" id="IPR011992">
    <property type="entry name" value="EF-hand-dom_pair"/>
</dbReference>
<dbReference type="InterPro" id="IPR018247">
    <property type="entry name" value="EF_Hand_1_Ca_BS"/>
</dbReference>
<dbReference type="InterPro" id="IPR002048">
    <property type="entry name" value="EF_hand_dom"/>
</dbReference>
<dbReference type="PANTHER" id="PTHR23050">
    <property type="entry name" value="CALCIUM BINDING PROTEIN"/>
    <property type="match status" value="1"/>
</dbReference>
<dbReference type="Pfam" id="PF13833">
    <property type="entry name" value="EF-hand_8"/>
    <property type="match status" value="1"/>
</dbReference>
<dbReference type="SMART" id="SM00054">
    <property type="entry name" value="EFh"/>
    <property type="match status" value="3"/>
</dbReference>
<dbReference type="SUPFAM" id="SSF47473">
    <property type="entry name" value="EF-hand"/>
    <property type="match status" value="1"/>
</dbReference>
<dbReference type="PROSITE" id="PS00018">
    <property type="entry name" value="EF_HAND_1"/>
    <property type="match status" value="1"/>
</dbReference>
<dbReference type="PROSITE" id="PS50222">
    <property type="entry name" value="EF_HAND_2"/>
    <property type="match status" value="3"/>
</dbReference>
<evidence type="ECO:0000250" key="1"/>
<evidence type="ECO:0000255" key="2">
    <source>
        <dbReference type="PROSITE-ProRule" id="PRU00448"/>
    </source>
</evidence>
<evidence type="ECO:0000305" key="3"/>
<protein>
    <recommendedName>
        <fullName>Centrin-B</fullName>
    </recommendedName>
    <alternativeName>
        <fullName>DdCen</fullName>
    </alternativeName>
</protein>
<reference key="1">
    <citation type="journal article" date="2005" name="Nature">
        <title>The genome of the social amoeba Dictyostelium discoideum.</title>
        <authorList>
            <person name="Eichinger L."/>
            <person name="Pachebat J.A."/>
            <person name="Gloeckner G."/>
            <person name="Rajandream M.A."/>
            <person name="Sucgang R."/>
            <person name="Berriman M."/>
            <person name="Song J."/>
            <person name="Olsen R."/>
            <person name="Szafranski K."/>
            <person name="Xu Q."/>
            <person name="Tunggal B."/>
            <person name="Kummerfeld S."/>
            <person name="Madera M."/>
            <person name="Konfortov B.A."/>
            <person name="Rivero F."/>
            <person name="Bankier A.T."/>
            <person name="Lehmann R."/>
            <person name="Hamlin N."/>
            <person name="Davies R."/>
            <person name="Gaudet P."/>
            <person name="Fey P."/>
            <person name="Pilcher K."/>
            <person name="Chen G."/>
            <person name="Saunders D."/>
            <person name="Sodergren E.J."/>
            <person name="Davis P."/>
            <person name="Kerhornou A."/>
            <person name="Nie X."/>
            <person name="Hall N."/>
            <person name="Anjard C."/>
            <person name="Hemphill L."/>
            <person name="Bason N."/>
            <person name="Farbrother P."/>
            <person name="Desany B."/>
            <person name="Just E."/>
            <person name="Morio T."/>
            <person name="Rost R."/>
            <person name="Churcher C.M."/>
            <person name="Cooper J."/>
            <person name="Haydock S."/>
            <person name="van Driessche N."/>
            <person name="Cronin A."/>
            <person name="Goodhead I."/>
            <person name="Muzny D.M."/>
            <person name="Mourier T."/>
            <person name="Pain A."/>
            <person name="Lu M."/>
            <person name="Harper D."/>
            <person name="Lindsay R."/>
            <person name="Hauser H."/>
            <person name="James K.D."/>
            <person name="Quiles M."/>
            <person name="Madan Babu M."/>
            <person name="Saito T."/>
            <person name="Buchrieser C."/>
            <person name="Wardroper A."/>
            <person name="Felder M."/>
            <person name="Thangavelu M."/>
            <person name="Johnson D."/>
            <person name="Knights A."/>
            <person name="Loulseged H."/>
            <person name="Mungall K.L."/>
            <person name="Oliver K."/>
            <person name="Price C."/>
            <person name="Quail M.A."/>
            <person name="Urushihara H."/>
            <person name="Hernandez J."/>
            <person name="Rabbinowitsch E."/>
            <person name="Steffen D."/>
            <person name="Sanders M."/>
            <person name="Ma J."/>
            <person name="Kohara Y."/>
            <person name="Sharp S."/>
            <person name="Simmonds M.N."/>
            <person name="Spiegler S."/>
            <person name="Tivey A."/>
            <person name="Sugano S."/>
            <person name="White B."/>
            <person name="Walker D."/>
            <person name="Woodward J.R."/>
            <person name="Winckler T."/>
            <person name="Tanaka Y."/>
            <person name="Shaulsky G."/>
            <person name="Schleicher M."/>
            <person name="Weinstock G.M."/>
            <person name="Rosenthal A."/>
            <person name="Cox E.C."/>
            <person name="Chisholm R.L."/>
            <person name="Gibbs R.A."/>
            <person name="Loomis W.F."/>
            <person name="Platzer M."/>
            <person name="Kay R.R."/>
            <person name="Williams J.G."/>
            <person name="Dear P.H."/>
            <person name="Noegel A.A."/>
            <person name="Barrell B.G."/>
            <person name="Kuspa A."/>
        </authorList>
    </citation>
    <scope>NUCLEOTIDE SEQUENCE [LARGE SCALE GENOMIC DNA]</scope>
    <source>
        <strain>AX4</strain>
    </source>
</reference>
<proteinExistence type="inferred from homology"/>
<sequence>MVKTNTNKLTDDQISEIKESFDMFKSDNGKLDNDQIKYAFKALGCEITEETLELIKKKGQKSISFNSFFELVSPYIPKRDSMSTLEQAFKLFVKDGSGITFKDLKKVAINIGEECSDSDLYDMIEFADTDGDGVINKSEFISLMTTKKVL</sequence>
<accession>Q54X77</accession>
<name>CETNB_DICDI</name>
<organism>
    <name type="scientific">Dictyostelium discoideum</name>
    <name type="common">Social amoeba</name>
    <dbReference type="NCBI Taxonomy" id="44689"/>
    <lineage>
        <taxon>Eukaryota</taxon>
        <taxon>Amoebozoa</taxon>
        <taxon>Evosea</taxon>
        <taxon>Eumycetozoa</taxon>
        <taxon>Dictyostelia</taxon>
        <taxon>Dictyosteliales</taxon>
        <taxon>Dictyosteliaceae</taxon>
        <taxon>Dictyostelium</taxon>
    </lineage>
</organism>
<feature type="chain" id="PRO_0000328316" description="Centrin-B">
    <location>
        <begin position="1"/>
        <end position="150"/>
    </location>
</feature>
<feature type="domain" description="EF-hand 1" evidence="2">
    <location>
        <begin position="12"/>
        <end position="46"/>
    </location>
</feature>
<feature type="domain" description="EF-hand 2" evidence="2">
    <location>
        <begin position="80"/>
        <end position="114"/>
    </location>
</feature>
<feature type="domain" description="EF-hand 3" evidence="2">
    <location>
        <begin position="115"/>
        <end position="150"/>
    </location>
</feature>
<feature type="binding site" evidence="2">
    <location>
        <position position="128"/>
    </location>
    <ligand>
        <name>Ca(2+)</name>
        <dbReference type="ChEBI" id="CHEBI:29108"/>
    </ligand>
</feature>
<feature type="binding site" evidence="2">
    <location>
        <position position="130"/>
    </location>
    <ligand>
        <name>Ca(2+)</name>
        <dbReference type="ChEBI" id="CHEBI:29108"/>
    </ligand>
</feature>
<feature type="binding site" evidence="2">
    <location>
        <position position="132"/>
    </location>
    <ligand>
        <name>Ca(2+)</name>
        <dbReference type="ChEBI" id="CHEBI:29108"/>
    </ligand>
</feature>
<feature type="binding site" evidence="2">
    <location>
        <position position="139"/>
    </location>
    <ligand>
        <name>Ca(2+)</name>
        <dbReference type="ChEBI" id="CHEBI:29108"/>
    </ligand>
</feature>
<gene>
    <name type="primary">cenB</name>
    <name type="ORF">DDB_G0279151</name>
</gene>
<keyword id="KW-0106">Calcium</keyword>
<keyword id="KW-0131">Cell cycle</keyword>
<keyword id="KW-0132">Cell division</keyword>
<keyword id="KW-0963">Cytoplasm</keyword>
<keyword id="KW-0206">Cytoskeleton</keyword>
<keyword id="KW-0479">Metal-binding</keyword>
<keyword id="KW-0498">Mitosis</keyword>
<keyword id="KW-1185">Reference proteome</keyword>
<keyword id="KW-0677">Repeat</keyword>
<comment type="function">
    <text evidence="1">Plays a fundamental role in microtubule-organizing center structure and function.</text>
</comment>
<comment type="subcellular location">
    <subcellularLocation>
        <location evidence="1">Cytoplasm</location>
        <location evidence="1">Cytoskeleton</location>
        <location evidence="1">Microtubule organizing center</location>
        <location evidence="1">Centrosome</location>
    </subcellularLocation>
</comment>
<comment type="miscellaneous">
    <text evidence="1">Binds one mole of calcium per mole of protein.</text>
</comment>
<comment type="similarity">
    <text evidence="3">Belongs to the centrin family.</text>
</comment>